<organism>
    <name type="scientific">Pseudomonas syringae pv. tomato (strain ATCC BAA-871 / DC3000)</name>
    <dbReference type="NCBI Taxonomy" id="223283"/>
    <lineage>
        <taxon>Bacteria</taxon>
        <taxon>Pseudomonadati</taxon>
        <taxon>Pseudomonadota</taxon>
        <taxon>Gammaproteobacteria</taxon>
        <taxon>Pseudomonadales</taxon>
        <taxon>Pseudomonadaceae</taxon>
        <taxon>Pseudomonas</taxon>
    </lineage>
</organism>
<evidence type="ECO:0000255" key="1">
    <source>
        <dbReference type="HAMAP-Rule" id="MF_01072"/>
    </source>
</evidence>
<accession>Q87UY1</accession>
<keyword id="KW-0997">Cell inner membrane</keyword>
<keyword id="KW-1003">Cell membrane</keyword>
<keyword id="KW-0328">Glycosyltransferase</keyword>
<keyword id="KW-0472">Membrane</keyword>
<keyword id="KW-1185">Reference proteome</keyword>
<keyword id="KW-0808">Transferase</keyword>
<keyword id="KW-0812">Transmembrane</keyword>
<keyword id="KW-1133">Transmembrane helix</keyword>
<comment type="function">
    <text evidence="1">Involved in the biosynthesis of osmoregulated periplasmic glucans (OPGs).</text>
</comment>
<comment type="pathway">
    <text evidence="1">Glycan metabolism; osmoregulated periplasmic glucan (OPG) biosynthesis.</text>
</comment>
<comment type="subcellular location">
    <subcellularLocation>
        <location evidence="1">Cell inner membrane</location>
        <topology evidence="1">Multi-pass membrane protein</topology>
    </subcellularLocation>
</comment>
<comment type="similarity">
    <text evidence="1">Belongs to the glycosyltransferase 2 family. OpgH subfamily.</text>
</comment>
<name>OPGH_PSESM</name>
<dbReference type="EC" id="2.4.1.-" evidence="1"/>
<dbReference type="EMBL" id="AE016853">
    <property type="protein sequence ID" value="AAO58587.1"/>
    <property type="molecule type" value="Genomic_DNA"/>
</dbReference>
<dbReference type="RefSeq" id="NP_794892.1">
    <property type="nucleotide sequence ID" value="NC_004578.1"/>
</dbReference>
<dbReference type="RefSeq" id="WP_007245578.1">
    <property type="nucleotide sequence ID" value="NC_004578.1"/>
</dbReference>
<dbReference type="STRING" id="223283.PSPTO_5161"/>
<dbReference type="CAZy" id="GT2">
    <property type="family name" value="Glycosyltransferase Family 2"/>
</dbReference>
<dbReference type="GeneID" id="1186846"/>
<dbReference type="KEGG" id="pst:PSPTO_5161"/>
<dbReference type="PATRIC" id="fig|223283.9.peg.5282"/>
<dbReference type="eggNOG" id="COG2943">
    <property type="taxonomic scope" value="Bacteria"/>
</dbReference>
<dbReference type="HOGENOM" id="CLU_015730_1_0_6"/>
<dbReference type="OrthoDB" id="9775281at2"/>
<dbReference type="PhylomeDB" id="Q87UY1"/>
<dbReference type="UniPathway" id="UPA00637"/>
<dbReference type="Proteomes" id="UP000002515">
    <property type="component" value="Chromosome"/>
</dbReference>
<dbReference type="GO" id="GO:0005886">
    <property type="term" value="C:plasma membrane"/>
    <property type="evidence" value="ECO:0007669"/>
    <property type="project" value="UniProtKB-SubCell"/>
</dbReference>
<dbReference type="GO" id="GO:0016758">
    <property type="term" value="F:hexosyltransferase activity"/>
    <property type="evidence" value="ECO:0007669"/>
    <property type="project" value="UniProtKB-UniRule"/>
</dbReference>
<dbReference type="GO" id="GO:0009250">
    <property type="term" value="P:glucan biosynthetic process"/>
    <property type="evidence" value="ECO:0007669"/>
    <property type="project" value="UniProtKB-UniRule"/>
</dbReference>
<dbReference type="CDD" id="cd04191">
    <property type="entry name" value="Glucan_BSP_MdoH"/>
    <property type="match status" value="1"/>
</dbReference>
<dbReference type="FunFam" id="3.90.550.10:FF:000047">
    <property type="entry name" value="Glucans biosynthesis glucosyltransferase H"/>
    <property type="match status" value="1"/>
</dbReference>
<dbReference type="Gene3D" id="3.90.550.10">
    <property type="entry name" value="Spore Coat Polysaccharide Biosynthesis Protein SpsA, Chain A"/>
    <property type="match status" value="1"/>
</dbReference>
<dbReference type="HAMAP" id="MF_01072">
    <property type="entry name" value="MdoH_OpgH"/>
    <property type="match status" value="1"/>
</dbReference>
<dbReference type="InterPro" id="IPR023725">
    <property type="entry name" value="Glucans_biosynth_gluTrFase_H"/>
</dbReference>
<dbReference type="InterPro" id="IPR001173">
    <property type="entry name" value="Glyco_trans_2-like"/>
</dbReference>
<dbReference type="InterPro" id="IPR050321">
    <property type="entry name" value="Glycosyltr_2/OpgH_subfam"/>
</dbReference>
<dbReference type="InterPro" id="IPR029044">
    <property type="entry name" value="Nucleotide-diphossugar_trans"/>
</dbReference>
<dbReference type="NCBIfam" id="NF003955">
    <property type="entry name" value="PRK05454.1-1"/>
    <property type="match status" value="1"/>
</dbReference>
<dbReference type="NCBIfam" id="NF003958">
    <property type="entry name" value="PRK05454.2-1"/>
    <property type="match status" value="1"/>
</dbReference>
<dbReference type="NCBIfam" id="NF003962">
    <property type="entry name" value="PRK05454.2-5"/>
    <property type="match status" value="1"/>
</dbReference>
<dbReference type="PANTHER" id="PTHR43867">
    <property type="entry name" value="CELLULOSE SYNTHASE CATALYTIC SUBUNIT A [UDP-FORMING]"/>
    <property type="match status" value="1"/>
</dbReference>
<dbReference type="PANTHER" id="PTHR43867:SF5">
    <property type="entry name" value="GLUCANS BIOSYNTHESIS GLUCOSYLTRANSFERASE H"/>
    <property type="match status" value="1"/>
</dbReference>
<dbReference type="Pfam" id="PF00535">
    <property type="entry name" value="Glycos_transf_2"/>
    <property type="match status" value="1"/>
</dbReference>
<dbReference type="SUPFAM" id="SSF53448">
    <property type="entry name" value="Nucleotide-diphospho-sugar transferases"/>
    <property type="match status" value="1"/>
</dbReference>
<protein>
    <recommendedName>
        <fullName evidence="1">Glucans biosynthesis glucosyltransferase H</fullName>
        <ecNumber evidence="1">2.4.1.-</ecNumber>
    </recommendedName>
</protein>
<sequence>MSNSQWVPVSLNEYLAHLPMSDEQRAELASCTTFAELHERLSAQPVTDPAEAAQASVGRRLTLSADDLEDAEMLGVDASGRLCLKATPPIRRTKVVPEPWRTNILVRGWRRLTGKSNPPKPDHSDLPRDLPKSRWRTVGSIRRYILLILMLGQTIVAGSYMKGILPYQGWSLVSLDEITRQTFVQTALQVLPYALQTSILLLFGILFCWVSAGFWTALMGFLELLTGRDKYRISGASAGNEPIEAGARTALVMPICNEDVPRVFAGLRATFESVAATGNLDRFDFFVLSDTNETDIAVAEQQAWLDVCRETKGFGSIFYRRRRRRVKRKSGNLDDFCRRWGGEYRYMVVLDADSVMSGECLTSLVRLMEATPDAGIIQTAPRASGMDTLYARMQQFATRVYGPLFTAGLHFWQLGESHYWGHNAIIRMKPFIEHCALAPLPGKGAFAGAILSHDFVEAALMRRAGWGVWIAYDLPGSYEELPPNLLDELKRDRRWCHGNLMNFRLFLVKGMHPVHRAVFLTGVMSYLSAPLWFFFLVLSTALLAVNTLMEPTYFLEPRQLYPLWPQWHPERAVALFSTTIVLLFLPKLLSVILIWAKGAKGFGGKFKVTVSMLLEMLFSVLLAPVRMLFHTRFVLAAFLGWAATWNSPQRDDDSTPWLEAVKRHGPQTLLGACWALLVFWLNPSFLWWLAPIVVSLMLSIPVSVISSRTNLGLKARDEKFFLIPEEFEPPQELVSTDQYTHENRWHALKQGFIRAVVDPRQNALACALATSRHRQAQPIEVVRMERVDHALKVGPAKLDNQHRLMLLSDPVALGRLHERVWSEGHEEWLAAWRASIEADPHAPLLPLQPVVKAPEPVLV</sequence>
<gene>
    <name evidence="1" type="primary">opgH</name>
    <name type="synonym">mdoH</name>
    <name type="ordered locus">PSPTO_5161</name>
</gene>
<proteinExistence type="inferred from homology"/>
<feature type="chain" id="PRO_0000210356" description="Glucans biosynthesis glucosyltransferase H">
    <location>
        <begin position="1"/>
        <end position="859"/>
    </location>
</feature>
<feature type="transmembrane region" description="Helical" evidence="1">
    <location>
        <begin position="144"/>
        <end position="166"/>
    </location>
</feature>
<feature type="transmembrane region" description="Helical" evidence="1">
    <location>
        <begin position="200"/>
        <end position="222"/>
    </location>
</feature>
<feature type="transmembrane region" description="Helical" evidence="1">
    <location>
        <begin position="523"/>
        <end position="545"/>
    </location>
</feature>
<feature type="transmembrane region" description="Helical" evidence="1">
    <location>
        <begin position="573"/>
        <end position="595"/>
    </location>
</feature>
<feature type="transmembrane region" description="Helical" evidence="1">
    <location>
        <begin position="608"/>
        <end position="630"/>
    </location>
</feature>
<feature type="transmembrane region" description="Helical" evidence="1">
    <location>
        <begin position="684"/>
        <end position="706"/>
    </location>
</feature>
<reference key="1">
    <citation type="journal article" date="2003" name="Proc. Natl. Acad. Sci. U.S.A.">
        <title>The complete genome sequence of the Arabidopsis and tomato pathogen Pseudomonas syringae pv. tomato DC3000.</title>
        <authorList>
            <person name="Buell C.R."/>
            <person name="Joardar V."/>
            <person name="Lindeberg M."/>
            <person name="Selengut J."/>
            <person name="Paulsen I.T."/>
            <person name="Gwinn M.L."/>
            <person name="Dodson R.J."/>
            <person name="DeBoy R.T."/>
            <person name="Durkin A.S."/>
            <person name="Kolonay J.F."/>
            <person name="Madupu R."/>
            <person name="Daugherty S.C."/>
            <person name="Brinkac L.M."/>
            <person name="Beanan M.J."/>
            <person name="Haft D.H."/>
            <person name="Nelson W.C."/>
            <person name="Davidsen T.M."/>
            <person name="Zafar N."/>
            <person name="Zhou L."/>
            <person name="Liu J."/>
            <person name="Yuan Q."/>
            <person name="Khouri H.M."/>
            <person name="Fedorova N.B."/>
            <person name="Tran B."/>
            <person name="Russell D."/>
            <person name="Berry K.J."/>
            <person name="Utterback T.R."/>
            <person name="Van Aken S.E."/>
            <person name="Feldblyum T.V."/>
            <person name="D'Ascenzo M."/>
            <person name="Deng W.-L."/>
            <person name="Ramos A.R."/>
            <person name="Alfano J.R."/>
            <person name="Cartinhour S."/>
            <person name="Chatterjee A.K."/>
            <person name="Delaney T.P."/>
            <person name="Lazarowitz S.G."/>
            <person name="Martin G.B."/>
            <person name="Schneider D.J."/>
            <person name="Tang X."/>
            <person name="Bender C.L."/>
            <person name="White O."/>
            <person name="Fraser C.M."/>
            <person name="Collmer A."/>
        </authorList>
    </citation>
    <scope>NUCLEOTIDE SEQUENCE [LARGE SCALE GENOMIC DNA]</scope>
    <source>
        <strain>ATCC BAA-871 / DC3000</strain>
    </source>
</reference>